<comment type="function">
    <text evidence="1">Acts as a processive, ATP-dependent zinc metallopeptidase for both cytoplasmic and membrane proteins. Plays a role in the quality control of integral membrane proteins.</text>
</comment>
<comment type="cofactor">
    <cofactor evidence="1">
        <name>Zn(2+)</name>
        <dbReference type="ChEBI" id="CHEBI:29105"/>
    </cofactor>
    <text evidence="1">Binds 1 zinc ion per subunit.</text>
</comment>
<comment type="subunit">
    <text evidence="1">Homohexamer.</text>
</comment>
<comment type="subcellular location">
    <subcellularLocation>
        <location evidence="1">Cell inner membrane</location>
        <topology evidence="1">Multi-pass membrane protein</topology>
        <orientation evidence="1">Cytoplasmic side</orientation>
    </subcellularLocation>
</comment>
<comment type="similarity">
    <text evidence="1">In the central section; belongs to the AAA ATPase family.</text>
</comment>
<comment type="similarity">
    <text evidence="1">In the C-terminal section; belongs to the peptidase M41 family.</text>
</comment>
<reference key="1">
    <citation type="journal article" date="2003" name="Proc. Natl. Acad. Sci. U.S.A.">
        <title>Complete genome sequence of the marine planctomycete Pirellula sp. strain 1.</title>
        <authorList>
            <person name="Gloeckner F.O."/>
            <person name="Kube M."/>
            <person name="Bauer M."/>
            <person name="Teeling H."/>
            <person name="Lombardot T."/>
            <person name="Ludwig W."/>
            <person name="Gade D."/>
            <person name="Beck A."/>
            <person name="Borzym K."/>
            <person name="Heitmann K."/>
            <person name="Rabus R."/>
            <person name="Schlesner H."/>
            <person name="Amann R."/>
            <person name="Reinhardt R."/>
        </authorList>
    </citation>
    <scope>NUCLEOTIDE SEQUENCE [LARGE SCALE GENOMIC DNA]</scope>
    <source>
        <strain>DSM 10527 / NCIMB 13988 / SH1</strain>
    </source>
</reference>
<proteinExistence type="inferred from homology"/>
<sequence length="672" mass="74401">MKKDSESNSSDKSNKEELSTGRRGGNPMIIALVITVLAAMLFFNQPEPSSLISASFFRSQLEKNNIESVEIGDIEVSGTFKTRPQMPASESADGDAKPKELLKRFRFTRPAGADYAVQLSEDLEKRNIKDWKFSPPDNTAAILNLLILVGLPLAIFFFIFMMIRRTRNDMMGGGFLSGFSKSPAKRFEATDKVITFNDVAGLEGVKADLQEIVDFLKTPEKFQKLGGQVPKGVLLNGPPGTGKTLLARAVAGEADVPFFSVNGSEFIQMFVGVGASRVRDLFKTAKEQSPSIIFIDEIDAVGRQRGAGLGGGHDEREQTLNQILGEMDGFGGAQAVIVIAATNRPDVLDPALLRPGRFDRHVTVGRPTMKGREEIFKVHVRDVPLGDDVDLHRLAAGTVGLTGADIRNMVNEAALWAARGDKKIVEMSDFDYARDKILMGAKREEVLLESEKEKTAYHEAGHTLTAWHLEGSHIVHKVTIIPRGRALGVTQYVPNEDRLSMSKRELEHQLIVLLGGRAAEKIIYTETCVGAENDLERATSIARRMVTHWGMSPKIGPVSYKTSDEDPFLGREIHQQRQFSEHTQELIDEEVARILMEADQKAEQLLREHRGQLETITRELLDREELNEAELTELIGPSIHKRLGDEEGKVEQIMAPEGAAERTSNASARRED</sequence>
<protein>
    <recommendedName>
        <fullName evidence="1">ATP-dependent zinc metalloprotease FtsH 1</fullName>
        <ecNumber evidence="1">3.4.24.-</ecNumber>
    </recommendedName>
</protein>
<dbReference type="EC" id="3.4.24.-" evidence="1"/>
<dbReference type="EMBL" id="BX294138">
    <property type="protein sequence ID" value="CAD72930.1"/>
    <property type="molecule type" value="Genomic_DNA"/>
</dbReference>
<dbReference type="RefSeq" id="NP_865246.1">
    <property type="nucleotide sequence ID" value="NC_005027.1"/>
</dbReference>
<dbReference type="SMR" id="Q7UUZ7"/>
<dbReference type="FunCoup" id="Q7UUZ7">
    <property type="interactions" value="471"/>
</dbReference>
<dbReference type="STRING" id="243090.RB2966"/>
<dbReference type="EnsemblBacteria" id="CAD72930">
    <property type="protein sequence ID" value="CAD72930"/>
    <property type="gene ID" value="RB2966"/>
</dbReference>
<dbReference type="KEGG" id="rba:RB2966"/>
<dbReference type="PATRIC" id="fig|243090.15.peg.1366"/>
<dbReference type="eggNOG" id="COG0465">
    <property type="taxonomic scope" value="Bacteria"/>
</dbReference>
<dbReference type="HOGENOM" id="CLU_000688_16_2_0"/>
<dbReference type="InParanoid" id="Q7UUZ7"/>
<dbReference type="OrthoDB" id="9809379at2"/>
<dbReference type="Proteomes" id="UP000001025">
    <property type="component" value="Chromosome"/>
</dbReference>
<dbReference type="GO" id="GO:0005886">
    <property type="term" value="C:plasma membrane"/>
    <property type="evidence" value="ECO:0000318"/>
    <property type="project" value="GO_Central"/>
</dbReference>
<dbReference type="GO" id="GO:0005524">
    <property type="term" value="F:ATP binding"/>
    <property type="evidence" value="ECO:0007669"/>
    <property type="project" value="UniProtKB-UniRule"/>
</dbReference>
<dbReference type="GO" id="GO:0016887">
    <property type="term" value="F:ATP hydrolysis activity"/>
    <property type="evidence" value="ECO:0007669"/>
    <property type="project" value="UniProtKB-UniRule"/>
</dbReference>
<dbReference type="GO" id="GO:0004176">
    <property type="term" value="F:ATP-dependent peptidase activity"/>
    <property type="evidence" value="ECO:0000318"/>
    <property type="project" value="GO_Central"/>
</dbReference>
<dbReference type="GO" id="GO:0004222">
    <property type="term" value="F:metalloendopeptidase activity"/>
    <property type="evidence" value="ECO:0007669"/>
    <property type="project" value="InterPro"/>
</dbReference>
<dbReference type="GO" id="GO:0008270">
    <property type="term" value="F:zinc ion binding"/>
    <property type="evidence" value="ECO:0007669"/>
    <property type="project" value="UniProtKB-UniRule"/>
</dbReference>
<dbReference type="GO" id="GO:0030163">
    <property type="term" value="P:protein catabolic process"/>
    <property type="evidence" value="ECO:0000318"/>
    <property type="project" value="GO_Central"/>
</dbReference>
<dbReference type="GO" id="GO:0006508">
    <property type="term" value="P:proteolysis"/>
    <property type="evidence" value="ECO:0000318"/>
    <property type="project" value="GO_Central"/>
</dbReference>
<dbReference type="CDD" id="cd19501">
    <property type="entry name" value="RecA-like_FtsH"/>
    <property type="match status" value="1"/>
</dbReference>
<dbReference type="FunFam" id="1.10.8.60:FF:000001">
    <property type="entry name" value="ATP-dependent zinc metalloprotease FtsH"/>
    <property type="match status" value="1"/>
</dbReference>
<dbReference type="FunFam" id="1.20.58.760:FF:000022">
    <property type="entry name" value="ATP-dependent zinc metalloprotease FtsH"/>
    <property type="match status" value="1"/>
</dbReference>
<dbReference type="FunFam" id="3.40.50.300:FF:000001">
    <property type="entry name" value="ATP-dependent zinc metalloprotease FtsH"/>
    <property type="match status" value="1"/>
</dbReference>
<dbReference type="Gene3D" id="1.10.8.60">
    <property type="match status" value="1"/>
</dbReference>
<dbReference type="Gene3D" id="3.40.50.300">
    <property type="entry name" value="P-loop containing nucleotide triphosphate hydrolases"/>
    <property type="match status" value="1"/>
</dbReference>
<dbReference type="Gene3D" id="1.20.58.760">
    <property type="entry name" value="Peptidase M41"/>
    <property type="match status" value="1"/>
</dbReference>
<dbReference type="HAMAP" id="MF_01458">
    <property type="entry name" value="FtsH"/>
    <property type="match status" value="1"/>
</dbReference>
<dbReference type="InterPro" id="IPR003593">
    <property type="entry name" value="AAA+_ATPase"/>
</dbReference>
<dbReference type="InterPro" id="IPR041569">
    <property type="entry name" value="AAA_lid_3"/>
</dbReference>
<dbReference type="InterPro" id="IPR003959">
    <property type="entry name" value="ATPase_AAA_core"/>
</dbReference>
<dbReference type="InterPro" id="IPR003960">
    <property type="entry name" value="ATPase_AAA_CS"/>
</dbReference>
<dbReference type="InterPro" id="IPR005936">
    <property type="entry name" value="FtsH"/>
</dbReference>
<dbReference type="InterPro" id="IPR027417">
    <property type="entry name" value="P-loop_NTPase"/>
</dbReference>
<dbReference type="InterPro" id="IPR011546">
    <property type="entry name" value="Pept_M41_FtsH_extracell"/>
</dbReference>
<dbReference type="InterPro" id="IPR000642">
    <property type="entry name" value="Peptidase_M41"/>
</dbReference>
<dbReference type="InterPro" id="IPR037219">
    <property type="entry name" value="Peptidase_M41-like"/>
</dbReference>
<dbReference type="NCBIfam" id="TIGR01241">
    <property type="entry name" value="FtsH_fam"/>
    <property type="match status" value="1"/>
</dbReference>
<dbReference type="PANTHER" id="PTHR23076:SF97">
    <property type="entry name" value="ATP-DEPENDENT ZINC METALLOPROTEASE YME1L1"/>
    <property type="match status" value="1"/>
</dbReference>
<dbReference type="PANTHER" id="PTHR23076">
    <property type="entry name" value="METALLOPROTEASE M41 FTSH"/>
    <property type="match status" value="1"/>
</dbReference>
<dbReference type="Pfam" id="PF00004">
    <property type="entry name" value="AAA"/>
    <property type="match status" value="1"/>
</dbReference>
<dbReference type="Pfam" id="PF17862">
    <property type="entry name" value="AAA_lid_3"/>
    <property type="match status" value="1"/>
</dbReference>
<dbReference type="Pfam" id="PF06480">
    <property type="entry name" value="FtsH_ext"/>
    <property type="match status" value="1"/>
</dbReference>
<dbReference type="Pfam" id="PF01434">
    <property type="entry name" value="Peptidase_M41"/>
    <property type="match status" value="1"/>
</dbReference>
<dbReference type="SMART" id="SM00382">
    <property type="entry name" value="AAA"/>
    <property type="match status" value="1"/>
</dbReference>
<dbReference type="SUPFAM" id="SSF140990">
    <property type="entry name" value="FtsH protease domain-like"/>
    <property type="match status" value="1"/>
</dbReference>
<dbReference type="SUPFAM" id="SSF52540">
    <property type="entry name" value="P-loop containing nucleoside triphosphate hydrolases"/>
    <property type="match status" value="1"/>
</dbReference>
<dbReference type="PROSITE" id="PS00674">
    <property type="entry name" value="AAA"/>
    <property type="match status" value="1"/>
</dbReference>
<accession>Q7UUZ7</accession>
<evidence type="ECO:0000255" key="1">
    <source>
        <dbReference type="HAMAP-Rule" id="MF_01458"/>
    </source>
</evidence>
<evidence type="ECO:0000256" key="2">
    <source>
        <dbReference type="SAM" id="MobiDB-lite"/>
    </source>
</evidence>
<name>FTSH1_RHOBA</name>
<keyword id="KW-0067">ATP-binding</keyword>
<keyword id="KW-0997">Cell inner membrane</keyword>
<keyword id="KW-1003">Cell membrane</keyword>
<keyword id="KW-0378">Hydrolase</keyword>
<keyword id="KW-0472">Membrane</keyword>
<keyword id="KW-0479">Metal-binding</keyword>
<keyword id="KW-0482">Metalloprotease</keyword>
<keyword id="KW-0547">Nucleotide-binding</keyword>
<keyword id="KW-0645">Protease</keyword>
<keyword id="KW-1185">Reference proteome</keyword>
<keyword id="KW-0812">Transmembrane</keyword>
<keyword id="KW-1133">Transmembrane helix</keyword>
<keyword id="KW-0862">Zinc</keyword>
<gene>
    <name evidence="1" type="primary">ftsH1</name>
    <name type="ordered locus">RB2966</name>
</gene>
<organism>
    <name type="scientific">Rhodopirellula baltica (strain DSM 10527 / NCIMB 13988 / SH1)</name>
    <dbReference type="NCBI Taxonomy" id="243090"/>
    <lineage>
        <taxon>Bacteria</taxon>
        <taxon>Pseudomonadati</taxon>
        <taxon>Planctomycetota</taxon>
        <taxon>Planctomycetia</taxon>
        <taxon>Pirellulales</taxon>
        <taxon>Pirellulaceae</taxon>
        <taxon>Rhodopirellula</taxon>
    </lineage>
</organism>
<feature type="chain" id="PRO_0000400384" description="ATP-dependent zinc metalloprotease FtsH 1">
    <location>
        <begin position="1"/>
        <end position="672"/>
    </location>
</feature>
<feature type="topological domain" description="Cytoplasmic" evidence="1">
    <location>
        <begin position="1"/>
        <end position="23"/>
    </location>
</feature>
<feature type="transmembrane region" description="Helical" evidence="1">
    <location>
        <begin position="24"/>
        <end position="44"/>
    </location>
</feature>
<feature type="topological domain" description="Periplasmic" evidence="1">
    <location>
        <begin position="45"/>
        <end position="141"/>
    </location>
</feature>
<feature type="transmembrane region" description="Helical" evidence="1">
    <location>
        <begin position="142"/>
        <end position="162"/>
    </location>
</feature>
<feature type="topological domain" description="Cytoplasmic" evidence="1">
    <location>
        <begin position="163"/>
        <end position="672"/>
    </location>
</feature>
<feature type="region of interest" description="Disordered" evidence="2">
    <location>
        <begin position="1"/>
        <end position="22"/>
    </location>
</feature>
<feature type="region of interest" description="Disordered" evidence="2">
    <location>
        <begin position="642"/>
        <end position="672"/>
    </location>
</feature>
<feature type="compositionally biased region" description="Polar residues" evidence="2">
    <location>
        <begin position="662"/>
        <end position="672"/>
    </location>
</feature>
<feature type="active site" evidence="1">
    <location>
        <position position="459"/>
    </location>
</feature>
<feature type="binding site" evidence="1">
    <location>
        <begin position="237"/>
        <end position="244"/>
    </location>
    <ligand>
        <name>ATP</name>
        <dbReference type="ChEBI" id="CHEBI:30616"/>
    </ligand>
</feature>
<feature type="binding site" evidence="1">
    <location>
        <position position="458"/>
    </location>
    <ligand>
        <name>Zn(2+)</name>
        <dbReference type="ChEBI" id="CHEBI:29105"/>
        <note>catalytic</note>
    </ligand>
</feature>
<feature type="binding site" evidence="1">
    <location>
        <position position="462"/>
    </location>
    <ligand>
        <name>Zn(2+)</name>
        <dbReference type="ChEBI" id="CHEBI:29105"/>
        <note>catalytic</note>
    </ligand>
</feature>
<feature type="binding site" evidence="1">
    <location>
        <position position="534"/>
    </location>
    <ligand>
        <name>Zn(2+)</name>
        <dbReference type="ChEBI" id="CHEBI:29105"/>
        <note>catalytic</note>
    </ligand>
</feature>